<proteinExistence type="inferred from homology"/>
<comment type="function">
    <text evidence="1">RuBisCO catalyzes two reactions: the carboxylation of D-ribulose 1,5-bisphosphate, the primary event in carbon dioxide fixation, as well as the oxidative fragmentation of the pentose substrate. Both reactions occur simultaneously and in competition at the same active site. Although the small subunit is not catalytic it is essential for maximal activity.</text>
</comment>
<comment type="subunit">
    <text evidence="1">Heterohexadecamer of 8 large and 8 small subunits.</text>
</comment>
<comment type="subcellular location">
    <subcellularLocation>
        <location evidence="1">Plastid</location>
        <location evidence="1">Chloroplast</location>
    </subcellularLocation>
</comment>
<comment type="miscellaneous">
    <text evidence="1">The basic functional RuBisCO is composed of a large chain homodimer in a 'head-to-tail' conformation. In form I RuBisCO this homodimer is arranged in a barrel-like tetramer with the small subunits forming a tetrameric 'cap' on each end of the 'barrel'.</text>
</comment>
<comment type="similarity">
    <text evidence="1">Belongs to the RuBisCO small chain family.</text>
</comment>
<name>RBS2_SOLTU</name>
<feature type="transit peptide" description="Chloroplast" evidence="1">
    <location>
        <begin position="1"/>
        <end position="57"/>
    </location>
</feature>
<feature type="chain" id="PRO_0000031551" description="Ribulose bisphosphate carboxylase small subunit, chloroplastic 2" evidence="1">
    <location>
        <begin position="58"/>
        <end position="181"/>
    </location>
</feature>
<organism>
    <name type="scientific">Solanum tuberosum</name>
    <name type="common">Potato</name>
    <dbReference type="NCBI Taxonomy" id="4113"/>
    <lineage>
        <taxon>Eukaryota</taxon>
        <taxon>Viridiplantae</taxon>
        <taxon>Streptophyta</taxon>
        <taxon>Embryophyta</taxon>
        <taxon>Tracheophyta</taxon>
        <taxon>Spermatophyta</taxon>
        <taxon>Magnoliopsida</taxon>
        <taxon>eudicotyledons</taxon>
        <taxon>Gunneridae</taxon>
        <taxon>Pentapetalae</taxon>
        <taxon>asterids</taxon>
        <taxon>lamiids</taxon>
        <taxon>Solanales</taxon>
        <taxon>Solanaceae</taxon>
        <taxon>Solanoideae</taxon>
        <taxon>Solaneae</taxon>
        <taxon>Solanum</taxon>
    </lineage>
</organism>
<gene>
    <name evidence="1" type="primary">RBCS2</name>
    <name type="synonym">RBCS-1</name>
</gene>
<reference key="1">
    <citation type="journal article" date="1988" name="Proc. Natl. Acad. Sci. U.S.A.">
        <title>rbcS genes in Solanum tuberosum: conservation of transit peptide and exon shuffling during evolution.</title>
        <authorList>
            <person name="Wolter F.P."/>
            <person name="Fritz C.C."/>
            <person name="Willmitzer L."/>
            <person name="Schell J."/>
            <person name="Schreier P.H."/>
        </authorList>
    </citation>
    <scope>NUCLEOTIDE SEQUENCE [GENOMIC DNA]</scope>
    <source>
        <strain>cv. HH1201/7</strain>
    </source>
</reference>
<reference key="2">
    <citation type="submission" date="1992-12" db="EMBL/GenBank/DDBJ databases">
        <authorList>
            <person name="Fritz C.C."/>
            <person name="Wolter F.P."/>
            <person name="Schenkemeyer V."/>
            <person name="Herget T."/>
            <person name="Schreier P.H."/>
        </authorList>
    </citation>
    <scope>NUCLEOTIDE SEQUENCE [GENOMIC DNA]</scope>
    <source>
        <strain>cv. AM 80.5793</strain>
    </source>
</reference>
<sequence>MASSVISSAAVATRTNVTQAGSMIAPFTGLKSAATFPVSRKQNLDITSIASNGGRVRCMQVWPPINMKKYETLSYLPDLTDEQLLKEVEYLLKNGWVPCLEFETEHGFVYRENHKSPGYYDGRYWTMWKLPMFGCTDATQVLAEVQECKKSYPQAWIRIIGFDNVRQVQCISFIAYKPEGY</sequence>
<protein>
    <recommendedName>
        <fullName evidence="1">Ribulose bisphosphate carboxylase small subunit, chloroplastic 2</fullName>
        <shortName evidence="1">RuBisCO small subunit 2</shortName>
    </recommendedName>
    <alternativeName>
        <fullName>Ribulose bisphosphate carboxylase small chain 1, chloroplastic</fullName>
        <shortName>RuBisCO small subunit 1</shortName>
    </alternativeName>
</protein>
<dbReference type="EMBL" id="X69759">
    <property type="protein sequence ID" value="CAA49413.1"/>
    <property type="molecule type" value="Genomic_DNA"/>
</dbReference>
<dbReference type="PIR" id="B31083">
    <property type="entry name" value="RKPOS1"/>
</dbReference>
<dbReference type="SMR" id="P26574"/>
<dbReference type="FunCoup" id="P26574">
    <property type="interactions" value="1469"/>
</dbReference>
<dbReference type="STRING" id="4113.P26574"/>
<dbReference type="PaxDb" id="4113-PGSC0003DMT400050381"/>
<dbReference type="eggNOG" id="ENOG502QT0M">
    <property type="taxonomic scope" value="Eukaryota"/>
</dbReference>
<dbReference type="InParanoid" id="P26574"/>
<dbReference type="Proteomes" id="UP000011115">
    <property type="component" value="Unassembled WGS sequence"/>
</dbReference>
<dbReference type="ExpressionAtlas" id="P26574">
    <property type="expression patterns" value="baseline and differential"/>
</dbReference>
<dbReference type="GO" id="GO:0009507">
    <property type="term" value="C:chloroplast"/>
    <property type="evidence" value="ECO:0007669"/>
    <property type="project" value="UniProtKB-SubCell"/>
</dbReference>
<dbReference type="GO" id="GO:0016984">
    <property type="term" value="F:ribulose-bisphosphate carboxylase activity"/>
    <property type="evidence" value="ECO:0007669"/>
    <property type="project" value="UniProtKB-UniRule"/>
</dbReference>
<dbReference type="GO" id="GO:0009853">
    <property type="term" value="P:photorespiration"/>
    <property type="evidence" value="ECO:0007669"/>
    <property type="project" value="UniProtKB-KW"/>
</dbReference>
<dbReference type="GO" id="GO:0019253">
    <property type="term" value="P:reductive pentose-phosphate cycle"/>
    <property type="evidence" value="ECO:0007669"/>
    <property type="project" value="UniProtKB-UniRule"/>
</dbReference>
<dbReference type="CDD" id="cd03527">
    <property type="entry name" value="RuBisCO_small"/>
    <property type="match status" value="1"/>
</dbReference>
<dbReference type="FunFam" id="3.30.190.10:FF:000001">
    <property type="entry name" value="Ribulose bisphosphate carboxylase small chain, chloroplastic"/>
    <property type="match status" value="1"/>
</dbReference>
<dbReference type="Gene3D" id="3.30.190.10">
    <property type="entry name" value="Ribulose bisphosphate carboxylase, small subunit"/>
    <property type="match status" value="1"/>
</dbReference>
<dbReference type="HAMAP" id="MF_00859">
    <property type="entry name" value="RuBisCO_S_bact"/>
    <property type="match status" value="1"/>
</dbReference>
<dbReference type="InterPro" id="IPR024681">
    <property type="entry name" value="RuBisCO_ssu"/>
</dbReference>
<dbReference type="InterPro" id="IPR000894">
    <property type="entry name" value="RuBisCO_ssu_dom"/>
</dbReference>
<dbReference type="InterPro" id="IPR024680">
    <property type="entry name" value="RuBisCO_ssu_N"/>
</dbReference>
<dbReference type="InterPro" id="IPR036385">
    <property type="entry name" value="RuBisCO_ssu_sf"/>
</dbReference>
<dbReference type="PANTHER" id="PTHR31262">
    <property type="entry name" value="RIBULOSE BISPHOSPHATE CARBOXYLASE SMALL CHAIN 1, CHLOROPLASTIC"/>
    <property type="match status" value="1"/>
</dbReference>
<dbReference type="PANTHER" id="PTHR31262:SF10">
    <property type="entry name" value="RIBULOSE BISPHOSPHATE CARBOXYLASE SMALL SUBUNIT 1A, CHLOROPLASTIC-RELATED"/>
    <property type="match status" value="1"/>
</dbReference>
<dbReference type="Pfam" id="PF12338">
    <property type="entry name" value="RbcS"/>
    <property type="match status" value="1"/>
</dbReference>
<dbReference type="Pfam" id="PF00101">
    <property type="entry name" value="RuBisCO_small"/>
    <property type="match status" value="1"/>
</dbReference>
<dbReference type="PRINTS" id="PR00152">
    <property type="entry name" value="RUBISCOSMALL"/>
</dbReference>
<dbReference type="SMART" id="SM00961">
    <property type="entry name" value="RuBisCO_small"/>
    <property type="match status" value="1"/>
</dbReference>
<dbReference type="SUPFAM" id="SSF55239">
    <property type="entry name" value="RuBisCO, small subunit"/>
    <property type="match status" value="1"/>
</dbReference>
<keyword id="KW-0113">Calvin cycle</keyword>
<keyword id="KW-0120">Carbon dioxide fixation</keyword>
<keyword id="KW-0150">Chloroplast</keyword>
<keyword id="KW-0601">Photorespiration</keyword>
<keyword id="KW-0602">Photosynthesis</keyword>
<keyword id="KW-0934">Plastid</keyword>
<keyword id="KW-1185">Reference proteome</keyword>
<keyword id="KW-0809">Transit peptide</keyword>
<accession>P26574</accession>
<evidence type="ECO:0000255" key="1">
    <source>
        <dbReference type="HAMAP-Rule" id="MF_00860"/>
    </source>
</evidence>